<comment type="function">
    <text>Could be a NAD-dependent oxidoreductase.</text>
</comment>
<keyword id="KW-0520">NAD</keyword>
<keyword id="KW-0560">Oxidoreductase</keyword>
<keyword id="KW-0614">Plasmid</keyword>
<keyword id="KW-1185">Reference proteome</keyword>
<geneLocation type="plasmid">
    <name>sym pNGR234a</name>
</geneLocation>
<feature type="chain" id="PRO_0000200933" description="Uncharacterized protein y4oX">
    <location>
        <begin position="1"/>
        <end position="360"/>
    </location>
</feature>
<feature type="binding site" evidence="1">
    <location>
        <begin position="4"/>
        <end position="22"/>
    </location>
    <ligand>
        <name>NAD(+)</name>
        <dbReference type="ChEBI" id="CHEBI:57540"/>
    </ligand>
</feature>
<dbReference type="EMBL" id="U00090">
    <property type="protein sequence ID" value="AAB91810.1"/>
    <property type="molecule type" value="Genomic_DNA"/>
</dbReference>
<dbReference type="RefSeq" id="NP_444013.1">
    <property type="nucleotide sequence ID" value="NC_000914.2"/>
</dbReference>
<dbReference type="RefSeq" id="WP_010875239.1">
    <property type="nucleotide sequence ID" value="NC_000914.2"/>
</dbReference>
<dbReference type="SMR" id="P55609"/>
<dbReference type="KEGG" id="rhi:NGR_a02120"/>
<dbReference type="PATRIC" id="fig|394.7.peg.223"/>
<dbReference type="eggNOG" id="COG0673">
    <property type="taxonomic scope" value="Bacteria"/>
</dbReference>
<dbReference type="HOGENOM" id="CLU_023194_2_0_5"/>
<dbReference type="OrthoDB" id="9792935at2"/>
<dbReference type="Proteomes" id="UP000001054">
    <property type="component" value="Plasmid pNGR234a"/>
</dbReference>
<dbReference type="GO" id="GO:0000166">
    <property type="term" value="F:nucleotide binding"/>
    <property type="evidence" value="ECO:0007669"/>
    <property type="project" value="InterPro"/>
</dbReference>
<dbReference type="GO" id="GO:0016491">
    <property type="term" value="F:oxidoreductase activity"/>
    <property type="evidence" value="ECO:0007669"/>
    <property type="project" value="UniProtKB-KW"/>
</dbReference>
<dbReference type="Gene3D" id="3.30.360.10">
    <property type="entry name" value="Dihydrodipicolinate Reductase, domain 2"/>
    <property type="match status" value="1"/>
</dbReference>
<dbReference type="Gene3D" id="3.40.50.720">
    <property type="entry name" value="NAD(P)-binding Rossmann-like Domain"/>
    <property type="match status" value="1"/>
</dbReference>
<dbReference type="InterPro" id="IPR004104">
    <property type="entry name" value="Gfo/Idh/MocA-like_OxRdtase_C"/>
</dbReference>
<dbReference type="InterPro" id="IPR000683">
    <property type="entry name" value="Gfo/Idh/MocA-like_OxRdtase_N"/>
</dbReference>
<dbReference type="InterPro" id="IPR051450">
    <property type="entry name" value="Gfo/Idh/MocA_Oxidoreductases"/>
</dbReference>
<dbReference type="InterPro" id="IPR036291">
    <property type="entry name" value="NAD(P)-bd_dom_sf"/>
</dbReference>
<dbReference type="PANTHER" id="PTHR43377">
    <property type="entry name" value="BILIVERDIN REDUCTASE A"/>
    <property type="match status" value="1"/>
</dbReference>
<dbReference type="PANTHER" id="PTHR43377:SF1">
    <property type="entry name" value="BILIVERDIN REDUCTASE A"/>
    <property type="match status" value="1"/>
</dbReference>
<dbReference type="Pfam" id="PF01408">
    <property type="entry name" value="GFO_IDH_MocA"/>
    <property type="match status" value="1"/>
</dbReference>
<dbReference type="Pfam" id="PF02894">
    <property type="entry name" value="GFO_IDH_MocA_C"/>
    <property type="match status" value="1"/>
</dbReference>
<dbReference type="SUPFAM" id="SSF55347">
    <property type="entry name" value="Glyceraldehyde-3-phosphate dehydrogenase-like, C-terminal domain"/>
    <property type="match status" value="1"/>
</dbReference>
<dbReference type="SUPFAM" id="SSF51735">
    <property type="entry name" value="NAD(P)-binding Rossmann-fold domains"/>
    <property type="match status" value="1"/>
</dbReference>
<name>Y4OX_SINFN</name>
<reference key="1">
    <citation type="journal article" date="1997" name="Nature">
        <title>Molecular basis of symbiosis between Rhizobium and legumes.</title>
        <authorList>
            <person name="Freiberg C.A."/>
            <person name="Fellay R."/>
            <person name="Bairoch A."/>
            <person name="Broughton W.J."/>
            <person name="Rosenthal A."/>
            <person name="Perret X."/>
        </authorList>
    </citation>
    <scope>NUCLEOTIDE SEQUENCE [LARGE SCALE GENOMIC DNA]</scope>
    <source>
        <strain>NBRC 101917 / NGR234</strain>
    </source>
</reference>
<reference key="2">
    <citation type="journal article" date="2009" name="Appl. Environ. Microbiol.">
        <title>Rhizobium sp. strain NGR234 possesses a remarkable number of secretion systems.</title>
        <authorList>
            <person name="Schmeisser C."/>
            <person name="Liesegang H."/>
            <person name="Krysciak D."/>
            <person name="Bakkou N."/>
            <person name="Le Quere A."/>
            <person name="Wollherr A."/>
            <person name="Heinemeyer I."/>
            <person name="Morgenstern B."/>
            <person name="Pommerening-Roeser A."/>
            <person name="Flores M."/>
            <person name="Palacios R."/>
            <person name="Brenner S."/>
            <person name="Gottschalk G."/>
            <person name="Schmitz R.A."/>
            <person name="Broughton W.J."/>
            <person name="Perret X."/>
            <person name="Strittmatter A.W."/>
            <person name="Streit W.R."/>
        </authorList>
    </citation>
    <scope>NUCLEOTIDE SEQUENCE [LARGE SCALE GENOMIC DNA]</scope>
    <source>
        <strain>NBRC 101917 / NGR234</strain>
    </source>
</reference>
<gene>
    <name type="ordered locus">NGR_a02120</name>
    <name type="ORF">y4oX</name>
</gene>
<organism>
    <name type="scientific">Sinorhizobium fredii (strain NBRC 101917 / NGR234)</name>
    <dbReference type="NCBI Taxonomy" id="394"/>
    <lineage>
        <taxon>Bacteria</taxon>
        <taxon>Pseudomonadati</taxon>
        <taxon>Pseudomonadota</taxon>
        <taxon>Alphaproteobacteria</taxon>
        <taxon>Hyphomicrobiales</taxon>
        <taxon>Rhizobiaceae</taxon>
        <taxon>Sinorhizobium/Ensifer group</taxon>
        <taxon>Sinorhizobium</taxon>
    </lineage>
</organism>
<evidence type="ECO:0000250" key="1"/>
<proteinExistence type="predicted"/>
<sequence>MTYKVLHIGAGGFGERWCDTFLPQNVADGTIEVVGLVDIDAKALDIGRKHLGLKAEQCFTAAAQAFQMVDADFCTIVIPPALHEGIVDLALARGMHILSEKPIADTMEASVRIAEKVRKSGLNMGVTMSHRFDQDKSTLRALVGADAIGRVNTVSCRFAGDFRLYDSWGRFRHEMMHPMLIEGAVHHLDIMADLAGAPCTSIYARTWKPEWADYKGDTDAIVLMDFANGAHGVYEGSSAQATGLNDWAFEYVRVEGESGTAILDHREIEVFHRYPMRLRQASRQGKGQQVSLLPGRKWQNALLIEQFCQWLDSGPPMATNVWENLQSVALVFSAIESVRLGQPVKVQEFLQSYRVGASIE</sequence>
<protein>
    <recommendedName>
        <fullName>Uncharacterized protein y4oX</fullName>
    </recommendedName>
</protein>
<accession>P55609</accession>